<sequence length="156" mass="17100">MACRLFWASRVASHLRISVAQRGFSSVVLKDLKYADSHEWVKIDGNKATFGITDHAQDHLGDVVYVELPDVGHSVSQGKSFGAVESVKATSDINSPVSGKVVEVNEELTESPGLVNSSPYEQGWIIKVELSDAGEAEKLMDSDKYSKFCEEEDAKH</sequence>
<evidence type="ECO:0000250" key="1"/>
<evidence type="ECO:0000250" key="2">
    <source>
        <dbReference type="UniProtKB" id="P25855"/>
    </source>
</evidence>
<evidence type="ECO:0000255" key="3"/>
<evidence type="ECO:0000255" key="4">
    <source>
        <dbReference type="PROSITE-ProRule" id="PRU01066"/>
    </source>
</evidence>
<evidence type="ECO:0000305" key="5"/>
<accession>O82179</accession>
<comment type="function">
    <text evidence="1">The glycine decarboxylase (GDC) or glycine cleavage system catalyzes the degradation of glycine. The H protein shuttles the methylamine group of glycine from the P protein to the T protein (By similarity).</text>
</comment>
<comment type="cofactor">
    <cofactor evidence="1">
        <name>(R)-lipoate</name>
        <dbReference type="ChEBI" id="CHEBI:83088"/>
    </cofactor>
    <text evidence="1">Binds 1 lipoyl cofactor covalently.</text>
</comment>
<comment type="subunit">
    <text>The glycine cleavage system is composed of four proteins: P, T, L and H.</text>
</comment>
<comment type="subcellular location">
    <subcellularLocation>
        <location evidence="3">Mitochondrion</location>
    </subcellularLocation>
</comment>
<comment type="similarity">
    <text evidence="5">Belongs to the GcvH family.</text>
</comment>
<gene>
    <name type="primary">GDH2</name>
    <name type="ordered locus">At2g35120</name>
    <name type="ORF">T4C15.21</name>
</gene>
<feature type="transit peptide" description="Mitochondrion" evidence="3">
    <location>
        <begin position="1"/>
        <end position="23"/>
    </location>
</feature>
<feature type="chain" id="PRO_0000422286" description="Glycine cleavage system H protein 2, mitochondrial">
    <location>
        <begin position="24"/>
        <end position="156"/>
    </location>
</feature>
<feature type="domain" description="Lipoyl-binding" evidence="4">
    <location>
        <begin position="47"/>
        <end position="129"/>
    </location>
</feature>
<feature type="modified residue" description="N6-lipoyllysine" evidence="1 4">
    <location>
        <position position="88"/>
    </location>
</feature>
<feature type="modified residue" description="Phosphoserine" evidence="2">
    <location>
        <position position="131"/>
    </location>
</feature>
<dbReference type="EMBL" id="AC004667">
    <property type="protein sequence ID" value="AAC61829.1"/>
    <property type="molecule type" value="Genomic_DNA"/>
</dbReference>
<dbReference type="EMBL" id="CP002685">
    <property type="protein sequence ID" value="AEC09067.1"/>
    <property type="molecule type" value="Genomic_DNA"/>
</dbReference>
<dbReference type="EMBL" id="AY056106">
    <property type="protein sequence ID" value="AAL06993.1"/>
    <property type="molecule type" value="mRNA"/>
</dbReference>
<dbReference type="EMBL" id="AY060493">
    <property type="protein sequence ID" value="AAL31106.1"/>
    <property type="molecule type" value="mRNA"/>
</dbReference>
<dbReference type="EMBL" id="AK227751">
    <property type="protein sequence ID" value="BAE99735.1"/>
    <property type="molecule type" value="mRNA"/>
</dbReference>
<dbReference type="PIR" id="H84764">
    <property type="entry name" value="H84764"/>
</dbReference>
<dbReference type="RefSeq" id="NP_181057.1">
    <property type="nucleotide sequence ID" value="NM_129065.4"/>
</dbReference>
<dbReference type="SMR" id="O82179"/>
<dbReference type="FunCoup" id="O82179">
    <property type="interactions" value="2419"/>
</dbReference>
<dbReference type="STRING" id="3702.O82179"/>
<dbReference type="iPTMnet" id="O82179"/>
<dbReference type="PaxDb" id="3702-AT2G35120.1"/>
<dbReference type="ProteomicsDB" id="222030"/>
<dbReference type="EnsemblPlants" id="AT2G35120.1">
    <property type="protein sequence ID" value="AT2G35120.1"/>
    <property type="gene ID" value="AT2G35120"/>
</dbReference>
<dbReference type="GeneID" id="818078"/>
<dbReference type="Gramene" id="AT2G35120.1">
    <property type="protein sequence ID" value="AT2G35120.1"/>
    <property type="gene ID" value="AT2G35120"/>
</dbReference>
<dbReference type="KEGG" id="ath:AT2G35120"/>
<dbReference type="Araport" id="AT2G35120"/>
<dbReference type="TAIR" id="AT2G35120"/>
<dbReference type="eggNOG" id="KOG3373">
    <property type="taxonomic scope" value="Eukaryota"/>
</dbReference>
<dbReference type="HOGENOM" id="CLU_097408_1_0_1"/>
<dbReference type="InParanoid" id="O82179"/>
<dbReference type="OMA" id="EHEWLSG"/>
<dbReference type="OrthoDB" id="10264154at2759"/>
<dbReference type="PhylomeDB" id="O82179"/>
<dbReference type="BioCyc" id="ARA:AT2G35120-MONOMER"/>
<dbReference type="BioCyc" id="MetaCyc:MONOMER-907"/>
<dbReference type="PRO" id="PR:O82179"/>
<dbReference type="Proteomes" id="UP000006548">
    <property type="component" value="Chromosome 2"/>
</dbReference>
<dbReference type="ExpressionAtlas" id="O82179">
    <property type="expression patterns" value="baseline and differential"/>
</dbReference>
<dbReference type="GO" id="GO:0005960">
    <property type="term" value="C:glycine cleavage complex"/>
    <property type="evidence" value="ECO:0007669"/>
    <property type="project" value="InterPro"/>
</dbReference>
<dbReference type="GO" id="GO:0005739">
    <property type="term" value="C:mitochondrion"/>
    <property type="evidence" value="ECO:0007005"/>
    <property type="project" value="TAIR"/>
</dbReference>
<dbReference type="GO" id="GO:0005524">
    <property type="term" value="F:ATP binding"/>
    <property type="evidence" value="ECO:0007005"/>
    <property type="project" value="TAIR"/>
</dbReference>
<dbReference type="GO" id="GO:0019464">
    <property type="term" value="P:glycine decarboxylation via glycine cleavage system"/>
    <property type="evidence" value="ECO:0007669"/>
    <property type="project" value="InterPro"/>
</dbReference>
<dbReference type="CDD" id="cd06848">
    <property type="entry name" value="GCS_H"/>
    <property type="match status" value="1"/>
</dbReference>
<dbReference type="FunFam" id="2.40.50.100:FF:000011">
    <property type="entry name" value="Glycine cleavage system H protein"/>
    <property type="match status" value="1"/>
</dbReference>
<dbReference type="Gene3D" id="2.40.50.100">
    <property type="match status" value="1"/>
</dbReference>
<dbReference type="HAMAP" id="MF_00272">
    <property type="entry name" value="GcvH"/>
    <property type="match status" value="1"/>
</dbReference>
<dbReference type="InterPro" id="IPR003016">
    <property type="entry name" value="2-oxoA_DH_lipoyl-BS"/>
</dbReference>
<dbReference type="InterPro" id="IPR000089">
    <property type="entry name" value="Biotin_lipoyl"/>
</dbReference>
<dbReference type="InterPro" id="IPR002930">
    <property type="entry name" value="GCV_H"/>
</dbReference>
<dbReference type="InterPro" id="IPR033753">
    <property type="entry name" value="GCV_H/Fam206"/>
</dbReference>
<dbReference type="InterPro" id="IPR017453">
    <property type="entry name" value="GCV_H_sub"/>
</dbReference>
<dbReference type="InterPro" id="IPR011053">
    <property type="entry name" value="Single_hybrid_motif"/>
</dbReference>
<dbReference type="NCBIfam" id="TIGR00527">
    <property type="entry name" value="gcvH"/>
    <property type="match status" value="1"/>
</dbReference>
<dbReference type="NCBIfam" id="NF002270">
    <property type="entry name" value="PRK01202.1"/>
    <property type="match status" value="1"/>
</dbReference>
<dbReference type="PANTHER" id="PTHR11715">
    <property type="entry name" value="GLYCINE CLEAVAGE SYSTEM H PROTEIN"/>
    <property type="match status" value="1"/>
</dbReference>
<dbReference type="PANTHER" id="PTHR11715:SF3">
    <property type="entry name" value="GLYCINE CLEAVAGE SYSTEM H PROTEIN-RELATED"/>
    <property type="match status" value="1"/>
</dbReference>
<dbReference type="Pfam" id="PF01597">
    <property type="entry name" value="GCV_H"/>
    <property type="match status" value="1"/>
</dbReference>
<dbReference type="SUPFAM" id="SSF51230">
    <property type="entry name" value="Single hybrid motif"/>
    <property type="match status" value="1"/>
</dbReference>
<dbReference type="PROSITE" id="PS50968">
    <property type="entry name" value="BIOTINYL_LIPOYL"/>
    <property type="match status" value="1"/>
</dbReference>
<dbReference type="PROSITE" id="PS00189">
    <property type="entry name" value="LIPOYL"/>
    <property type="match status" value="1"/>
</dbReference>
<protein>
    <recommendedName>
        <fullName>Glycine cleavage system H protein 2, mitochondrial</fullName>
    </recommendedName>
</protein>
<name>GCSH2_ARATH</name>
<proteinExistence type="evidence at transcript level"/>
<keyword id="KW-0450">Lipoyl</keyword>
<keyword id="KW-0496">Mitochondrion</keyword>
<keyword id="KW-0597">Phosphoprotein</keyword>
<keyword id="KW-1185">Reference proteome</keyword>
<keyword id="KW-0809">Transit peptide</keyword>
<reference key="1">
    <citation type="journal article" date="1999" name="Nature">
        <title>Sequence and analysis of chromosome 2 of the plant Arabidopsis thaliana.</title>
        <authorList>
            <person name="Lin X."/>
            <person name="Kaul S."/>
            <person name="Rounsley S.D."/>
            <person name="Shea T.P."/>
            <person name="Benito M.-I."/>
            <person name="Town C.D."/>
            <person name="Fujii C.Y."/>
            <person name="Mason T.M."/>
            <person name="Bowman C.L."/>
            <person name="Barnstead M.E."/>
            <person name="Feldblyum T.V."/>
            <person name="Buell C.R."/>
            <person name="Ketchum K.A."/>
            <person name="Lee J.J."/>
            <person name="Ronning C.M."/>
            <person name="Koo H.L."/>
            <person name="Moffat K.S."/>
            <person name="Cronin L.A."/>
            <person name="Shen M."/>
            <person name="Pai G."/>
            <person name="Van Aken S."/>
            <person name="Umayam L."/>
            <person name="Tallon L.J."/>
            <person name="Gill J.E."/>
            <person name="Adams M.D."/>
            <person name="Carrera A.J."/>
            <person name="Creasy T.H."/>
            <person name="Goodman H.M."/>
            <person name="Somerville C.R."/>
            <person name="Copenhaver G.P."/>
            <person name="Preuss D."/>
            <person name="Nierman W.C."/>
            <person name="White O."/>
            <person name="Eisen J.A."/>
            <person name="Salzberg S.L."/>
            <person name="Fraser C.M."/>
            <person name="Venter J.C."/>
        </authorList>
    </citation>
    <scope>NUCLEOTIDE SEQUENCE [LARGE SCALE GENOMIC DNA]</scope>
    <source>
        <strain>cv. Columbia</strain>
    </source>
</reference>
<reference key="2">
    <citation type="journal article" date="2017" name="Plant J.">
        <title>Araport11: a complete reannotation of the Arabidopsis thaliana reference genome.</title>
        <authorList>
            <person name="Cheng C.Y."/>
            <person name="Krishnakumar V."/>
            <person name="Chan A.P."/>
            <person name="Thibaud-Nissen F."/>
            <person name="Schobel S."/>
            <person name="Town C.D."/>
        </authorList>
    </citation>
    <scope>GENOME REANNOTATION</scope>
    <source>
        <strain>cv. Columbia</strain>
    </source>
</reference>
<reference key="3">
    <citation type="journal article" date="2003" name="Science">
        <title>Empirical analysis of transcriptional activity in the Arabidopsis genome.</title>
        <authorList>
            <person name="Yamada K."/>
            <person name="Lim J."/>
            <person name="Dale J.M."/>
            <person name="Chen H."/>
            <person name="Shinn P."/>
            <person name="Palm C.J."/>
            <person name="Southwick A.M."/>
            <person name="Wu H.C."/>
            <person name="Kim C.J."/>
            <person name="Nguyen M."/>
            <person name="Pham P.K."/>
            <person name="Cheuk R.F."/>
            <person name="Karlin-Newmann G."/>
            <person name="Liu S.X."/>
            <person name="Lam B."/>
            <person name="Sakano H."/>
            <person name="Wu T."/>
            <person name="Yu G."/>
            <person name="Miranda M."/>
            <person name="Quach H.L."/>
            <person name="Tripp M."/>
            <person name="Chang C.H."/>
            <person name="Lee J.M."/>
            <person name="Toriumi M.J."/>
            <person name="Chan M.M."/>
            <person name="Tang C.C."/>
            <person name="Onodera C.S."/>
            <person name="Deng J.M."/>
            <person name="Akiyama K."/>
            <person name="Ansari Y."/>
            <person name="Arakawa T."/>
            <person name="Banh J."/>
            <person name="Banno F."/>
            <person name="Bowser L."/>
            <person name="Brooks S.Y."/>
            <person name="Carninci P."/>
            <person name="Chao Q."/>
            <person name="Choy N."/>
            <person name="Enju A."/>
            <person name="Goldsmith A.D."/>
            <person name="Gurjal M."/>
            <person name="Hansen N.F."/>
            <person name="Hayashizaki Y."/>
            <person name="Johnson-Hopson C."/>
            <person name="Hsuan V.W."/>
            <person name="Iida K."/>
            <person name="Karnes M."/>
            <person name="Khan S."/>
            <person name="Koesema E."/>
            <person name="Ishida J."/>
            <person name="Jiang P.X."/>
            <person name="Jones T."/>
            <person name="Kawai J."/>
            <person name="Kamiya A."/>
            <person name="Meyers C."/>
            <person name="Nakajima M."/>
            <person name="Narusaka M."/>
            <person name="Seki M."/>
            <person name="Sakurai T."/>
            <person name="Satou M."/>
            <person name="Tamse R."/>
            <person name="Vaysberg M."/>
            <person name="Wallender E.K."/>
            <person name="Wong C."/>
            <person name="Yamamura Y."/>
            <person name="Yuan S."/>
            <person name="Shinozaki K."/>
            <person name="Davis R.W."/>
            <person name="Theologis A."/>
            <person name="Ecker J.R."/>
        </authorList>
    </citation>
    <scope>NUCLEOTIDE SEQUENCE [LARGE SCALE MRNA]</scope>
    <source>
        <strain>cv. Columbia</strain>
    </source>
</reference>
<reference key="4">
    <citation type="submission" date="2006-07" db="EMBL/GenBank/DDBJ databases">
        <title>Large-scale analysis of RIKEN Arabidopsis full-length (RAFL) cDNAs.</title>
        <authorList>
            <person name="Totoki Y."/>
            <person name="Seki M."/>
            <person name="Ishida J."/>
            <person name="Nakajima M."/>
            <person name="Enju A."/>
            <person name="Kamiya A."/>
            <person name="Narusaka M."/>
            <person name="Shin-i T."/>
            <person name="Nakagawa M."/>
            <person name="Sakamoto N."/>
            <person name="Oishi K."/>
            <person name="Kohara Y."/>
            <person name="Kobayashi M."/>
            <person name="Toyoda A."/>
            <person name="Sakaki Y."/>
            <person name="Sakurai T."/>
            <person name="Iida K."/>
            <person name="Akiyama K."/>
            <person name="Satou M."/>
            <person name="Toyoda T."/>
            <person name="Konagaya A."/>
            <person name="Carninci P."/>
            <person name="Kawai J."/>
            <person name="Hayashizaki Y."/>
            <person name="Shinozaki K."/>
        </authorList>
    </citation>
    <scope>NUCLEOTIDE SEQUENCE [LARGE SCALE MRNA]</scope>
    <source>
        <strain>cv. Columbia</strain>
    </source>
</reference>
<reference key="5">
    <citation type="journal article" date="2001" name="Trends Plant Sci.">
        <title>The glycine decarboxylase system: a fascinating complex.</title>
        <authorList>
            <person name="Douce R."/>
            <person name="Bourguignon J."/>
            <person name="Neuburger M."/>
            <person name="Rebeille F."/>
        </authorList>
    </citation>
    <scope>REVIEW</scope>
</reference>
<reference key="6">
    <citation type="journal article" date="2003" name="J. Exp. Bot.">
        <title>Genetic manipulation of glycine decarboxylation.</title>
        <authorList>
            <person name="Bauwe H."/>
            <person name="Kolukisaoglu U."/>
        </authorList>
    </citation>
    <scope>REVIEW</scope>
    <scope>NOMENCLATURE</scope>
</reference>
<organism>
    <name type="scientific">Arabidopsis thaliana</name>
    <name type="common">Mouse-ear cress</name>
    <dbReference type="NCBI Taxonomy" id="3702"/>
    <lineage>
        <taxon>Eukaryota</taxon>
        <taxon>Viridiplantae</taxon>
        <taxon>Streptophyta</taxon>
        <taxon>Embryophyta</taxon>
        <taxon>Tracheophyta</taxon>
        <taxon>Spermatophyta</taxon>
        <taxon>Magnoliopsida</taxon>
        <taxon>eudicotyledons</taxon>
        <taxon>Gunneridae</taxon>
        <taxon>Pentapetalae</taxon>
        <taxon>rosids</taxon>
        <taxon>malvids</taxon>
        <taxon>Brassicales</taxon>
        <taxon>Brassicaceae</taxon>
        <taxon>Camelineae</taxon>
        <taxon>Arabidopsis</taxon>
    </lineage>
</organism>